<protein>
    <recommendedName>
        <fullName evidence="1">UDP-3-O-acyl-N-acetylglucosamine deacetylase</fullName>
        <shortName evidence="1">UDP-3-O-acyl-GlcNAc deacetylase</shortName>
        <ecNumber evidence="1">3.5.1.108</ecNumber>
    </recommendedName>
    <alternativeName>
        <fullName evidence="1">UDP-3-O-[R-3-hydroxymyristoyl]-N-acetylglucosamine deacetylase</fullName>
    </alternativeName>
</protein>
<keyword id="KW-0378">Hydrolase</keyword>
<keyword id="KW-0441">Lipid A biosynthesis</keyword>
<keyword id="KW-0444">Lipid biosynthesis</keyword>
<keyword id="KW-0443">Lipid metabolism</keyword>
<keyword id="KW-0479">Metal-binding</keyword>
<keyword id="KW-0862">Zinc</keyword>
<sequence>MMKQKTIAKEFSVTGVGLHSGVDVSMTVKPADIDSGIVFRRADLTPVVDIKVTPSSIKEAIMCTLLTKDGDQNLSVSTIEHLMSAFAMFEVDNVLIEVNAPELPVMDGSSYEFTQLLKQVGIVEQNSARKGIKILKPVRVEHEDKFAEVLPSDTLKYEFKIHWDHPVIAATNDHIVFEYDLDEYIKMVSKARTFGFYEQLAYLHQNNLAKGASLDNAVGVTNEGVLNEGGLRYDDEFVRHKLLDAIGDFYVGGYILGHFNCFKSGHTLNNKLLHAVFADKDAWEYI</sequence>
<name>LPXC_FRATF</name>
<accession>A7NET5</accession>
<gene>
    <name evidence="1" type="primary">lpxC</name>
    <name type="ordered locus">FTA_2013</name>
</gene>
<evidence type="ECO:0000255" key="1">
    <source>
        <dbReference type="HAMAP-Rule" id="MF_00388"/>
    </source>
</evidence>
<dbReference type="EC" id="3.5.1.108" evidence="1"/>
<dbReference type="EMBL" id="CP000803">
    <property type="protein sequence ID" value="ABU62488.1"/>
    <property type="molecule type" value="Genomic_DNA"/>
</dbReference>
<dbReference type="RefSeq" id="WP_003017478.1">
    <property type="nucleotide sequence ID" value="NC_009749.1"/>
</dbReference>
<dbReference type="SMR" id="A7NET5"/>
<dbReference type="KEGG" id="fta:FTA_2013"/>
<dbReference type="HOGENOM" id="CLU_046528_1_0_6"/>
<dbReference type="UniPathway" id="UPA00359">
    <property type="reaction ID" value="UER00478"/>
</dbReference>
<dbReference type="GO" id="GO:0016020">
    <property type="term" value="C:membrane"/>
    <property type="evidence" value="ECO:0007669"/>
    <property type="project" value="GOC"/>
</dbReference>
<dbReference type="GO" id="GO:0046872">
    <property type="term" value="F:metal ion binding"/>
    <property type="evidence" value="ECO:0007669"/>
    <property type="project" value="UniProtKB-KW"/>
</dbReference>
<dbReference type="GO" id="GO:0103117">
    <property type="term" value="F:UDP-3-O-acyl-N-acetylglucosamine deacetylase activity"/>
    <property type="evidence" value="ECO:0007669"/>
    <property type="project" value="UniProtKB-UniRule"/>
</dbReference>
<dbReference type="GO" id="GO:0009245">
    <property type="term" value="P:lipid A biosynthetic process"/>
    <property type="evidence" value="ECO:0007669"/>
    <property type="project" value="UniProtKB-UniRule"/>
</dbReference>
<dbReference type="Gene3D" id="3.30.230.20">
    <property type="entry name" value="lpxc deacetylase, domain 1"/>
    <property type="match status" value="1"/>
</dbReference>
<dbReference type="Gene3D" id="3.30.1700.10">
    <property type="entry name" value="lpxc deacetylase, domain 2"/>
    <property type="match status" value="1"/>
</dbReference>
<dbReference type="HAMAP" id="MF_00388">
    <property type="entry name" value="LpxC"/>
    <property type="match status" value="1"/>
</dbReference>
<dbReference type="InterPro" id="IPR020568">
    <property type="entry name" value="Ribosomal_Su5_D2-typ_SF"/>
</dbReference>
<dbReference type="InterPro" id="IPR004463">
    <property type="entry name" value="UDP-acyl_GlcNac_deAcase"/>
</dbReference>
<dbReference type="InterPro" id="IPR011334">
    <property type="entry name" value="UDP-acyl_GlcNac_deAcase_C"/>
</dbReference>
<dbReference type="InterPro" id="IPR015870">
    <property type="entry name" value="UDP-acyl_N-AcGlcN_deAcase_N"/>
</dbReference>
<dbReference type="NCBIfam" id="TIGR00325">
    <property type="entry name" value="lpxC"/>
    <property type="match status" value="1"/>
</dbReference>
<dbReference type="PANTHER" id="PTHR33694">
    <property type="entry name" value="UDP-3-O-ACYL-N-ACETYLGLUCOSAMINE DEACETYLASE 1, MITOCHONDRIAL-RELATED"/>
    <property type="match status" value="1"/>
</dbReference>
<dbReference type="PANTHER" id="PTHR33694:SF1">
    <property type="entry name" value="UDP-3-O-ACYL-N-ACETYLGLUCOSAMINE DEACETYLASE 1, MITOCHONDRIAL-RELATED"/>
    <property type="match status" value="1"/>
</dbReference>
<dbReference type="Pfam" id="PF03331">
    <property type="entry name" value="LpxC"/>
    <property type="match status" value="1"/>
</dbReference>
<dbReference type="SUPFAM" id="SSF54211">
    <property type="entry name" value="Ribosomal protein S5 domain 2-like"/>
    <property type="match status" value="2"/>
</dbReference>
<organism>
    <name type="scientific">Francisella tularensis subsp. holarctica (strain FTNF002-00 / FTA)</name>
    <dbReference type="NCBI Taxonomy" id="458234"/>
    <lineage>
        <taxon>Bacteria</taxon>
        <taxon>Pseudomonadati</taxon>
        <taxon>Pseudomonadota</taxon>
        <taxon>Gammaproteobacteria</taxon>
        <taxon>Thiotrichales</taxon>
        <taxon>Francisellaceae</taxon>
        <taxon>Francisella</taxon>
    </lineage>
</organism>
<proteinExistence type="inferred from homology"/>
<comment type="function">
    <text evidence="1">Catalyzes the hydrolysis of UDP-3-O-myristoyl-N-acetylglucosamine to form UDP-3-O-myristoylglucosamine and acetate, the committed step in lipid A biosynthesis.</text>
</comment>
<comment type="catalytic activity">
    <reaction evidence="1">
        <text>a UDP-3-O-[(3R)-3-hydroxyacyl]-N-acetyl-alpha-D-glucosamine + H2O = a UDP-3-O-[(3R)-3-hydroxyacyl]-alpha-D-glucosamine + acetate</text>
        <dbReference type="Rhea" id="RHEA:67816"/>
        <dbReference type="ChEBI" id="CHEBI:15377"/>
        <dbReference type="ChEBI" id="CHEBI:30089"/>
        <dbReference type="ChEBI" id="CHEBI:137740"/>
        <dbReference type="ChEBI" id="CHEBI:173225"/>
        <dbReference type="EC" id="3.5.1.108"/>
    </reaction>
</comment>
<comment type="cofactor">
    <cofactor evidence="1">
        <name>Zn(2+)</name>
        <dbReference type="ChEBI" id="CHEBI:29105"/>
    </cofactor>
</comment>
<comment type="pathway">
    <text evidence="1">Glycolipid biosynthesis; lipid IV(A) biosynthesis; lipid IV(A) from (3R)-3-hydroxytetradecanoyl-[acyl-carrier-protein] and UDP-N-acetyl-alpha-D-glucosamine: step 2/6.</text>
</comment>
<comment type="similarity">
    <text evidence="1">Belongs to the LpxC family.</text>
</comment>
<feature type="chain" id="PRO_1000122790" description="UDP-3-O-acyl-N-acetylglucosamine deacetylase">
    <location>
        <begin position="1"/>
        <end position="286"/>
    </location>
</feature>
<feature type="active site" description="Proton donor" evidence="1">
    <location>
        <position position="266"/>
    </location>
</feature>
<feature type="binding site" evidence="1">
    <location>
        <position position="81"/>
    </location>
    <ligand>
        <name>Zn(2+)</name>
        <dbReference type="ChEBI" id="CHEBI:29105"/>
    </ligand>
</feature>
<feature type="binding site" evidence="1">
    <location>
        <position position="240"/>
    </location>
    <ligand>
        <name>Zn(2+)</name>
        <dbReference type="ChEBI" id="CHEBI:29105"/>
    </ligand>
</feature>
<feature type="binding site" evidence="1">
    <location>
        <position position="244"/>
    </location>
    <ligand>
        <name>Zn(2+)</name>
        <dbReference type="ChEBI" id="CHEBI:29105"/>
    </ligand>
</feature>
<reference key="1">
    <citation type="journal article" date="2009" name="PLoS ONE">
        <title>Complete genome sequence of Francisella tularensis subspecies holarctica FTNF002-00.</title>
        <authorList>
            <person name="Barabote R.D."/>
            <person name="Xie G."/>
            <person name="Brettin T.S."/>
            <person name="Hinrichs S.H."/>
            <person name="Fey P.D."/>
            <person name="Jay J.J."/>
            <person name="Engle J.L."/>
            <person name="Godbole S.D."/>
            <person name="Noronha J.M."/>
            <person name="Scheuermann R.H."/>
            <person name="Zhou L.W."/>
            <person name="Lion C."/>
            <person name="Dempsey M.P."/>
        </authorList>
    </citation>
    <scope>NUCLEOTIDE SEQUENCE [LARGE SCALE GENOMIC DNA]</scope>
    <source>
        <strain>FTNF002-00 / FTA</strain>
    </source>
</reference>